<proteinExistence type="inferred from homology"/>
<name>FTSW_SYNY3</name>
<evidence type="ECO:0000250" key="1"/>
<evidence type="ECO:0000250" key="2">
    <source>
        <dbReference type="UniProtKB" id="O07639"/>
    </source>
</evidence>
<evidence type="ECO:0000250" key="3">
    <source>
        <dbReference type="UniProtKB" id="P39604"/>
    </source>
</evidence>
<evidence type="ECO:0000255" key="4"/>
<evidence type="ECO:0000305" key="5"/>
<keyword id="KW-0131">Cell cycle</keyword>
<keyword id="KW-0132">Cell division</keyword>
<keyword id="KW-0997">Cell inner membrane</keyword>
<keyword id="KW-1003">Cell membrane</keyword>
<keyword id="KW-0133">Cell shape</keyword>
<keyword id="KW-0961">Cell wall biogenesis/degradation</keyword>
<keyword id="KW-0328">Glycosyltransferase</keyword>
<keyword id="KW-0472">Membrane</keyword>
<keyword id="KW-0573">Peptidoglycan synthesis</keyword>
<keyword id="KW-1185">Reference proteome</keyword>
<keyword id="KW-0808">Transferase</keyword>
<keyword id="KW-0812">Transmembrane</keyword>
<keyword id="KW-1133">Transmembrane helix</keyword>
<accession>P74180</accession>
<protein>
    <recommendedName>
        <fullName evidence="3">Probable peptidoglycan glycosyltransferase FtsW</fullName>
        <shortName evidence="3">PGT</shortName>
        <ecNumber evidence="3">2.4.99.28</ecNumber>
    </recommendedName>
    <alternativeName>
        <fullName evidence="2">Cell division protein FtsW</fullName>
    </alternativeName>
    <alternativeName>
        <fullName evidence="3">Cell wall polymerase</fullName>
    </alternativeName>
    <alternativeName>
        <fullName evidence="3">Peptidoglycan polymerase</fullName>
        <shortName evidence="3">PG polymerase</shortName>
    </alternativeName>
</protein>
<sequence length="393" mass="43038">MITAANLLRIIFPFYDPEVLRWSGEARLMRTLFFAWMAMGVVVLFSASYAESLDTSGTGLSIILKQIAYLWLGLNIFNFLVRLPLQVCLKLVPWFLIVVLLLIFLTKSGLGVEVNGARRWISLGPILIQPSEFMKPCLVLQAANLFGNWHRFPWRSRLIWLGIFALTLGSILLQPNLSTTALCGMGLWLIALASGLPWIYLISTALLGITTAVTSISIRDYQRARVTSFLDPFADPRGDGYQLVQSLYAIASGGVLGRGFGMSQQKLFYLPIQTTDFIFAVFAEEFGLVGCITFLAFLGLFTTMGLRVAMRCRHRVKRLIGLGVVIFLVGQSLLNIGVASGALPTTGLPLPFFSYGGSSCLSSLVLAGLLVRVARESNEAEVIPLGTKTAPAV</sequence>
<dbReference type="EC" id="2.4.99.28" evidence="3"/>
<dbReference type="EMBL" id="BA000022">
    <property type="protein sequence ID" value="BAA18269.1"/>
    <property type="molecule type" value="Genomic_DNA"/>
</dbReference>
<dbReference type="PIR" id="S75810">
    <property type="entry name" value="S75810"/>
</dbReference>
<dbReference type="SMR" id="P74180"/>
<dbReference type="FunCoup" id="P74180">
    <property type="interactions" value="290"/>
</dbReference>
<dbReference type="IntAct" id="P74180">
    <property type="interactions" value="2"/>
</dbReference>
<dbReference type="STRING" id="1148.gene:10499145"/>
<dbReference type="PaxDb" id="1148-1653355"/>
<dbReference type="EnsemblBacteria" id="BAA18269">
    <property type="protein sequence ID" value="BAA18269"/>
    <property type="gene ID" value="BAA18269"/>
</dbReference>
<dbReference type="KEGG" id="syn:slr1267"/>
<dbReference type="eggNOG" id="COG0772">
    <property type="taxonomic scope" value="Bacteria"/>
</dbReference>
<dbReference type="InParanoid" id="P74180"/>
<dbReference type="PhylomeDB" id="P74180"/>
<dbReference type="UniPathway" id="UPA00219"/>
<dbReference type="Proteomes" id="UP000001425">
    <property type="component" value="Chromosome"/>
</dbReference>
<dbReference type="GO" id="GO:0032153">
    <property type="term" value="C:cell division site"/>
    <property type="evidence" value="ECO:0000318"/>
    <property type="project" value="GO_Central"/>
</dbReference>
<dbReference type="GO" id="GO:0005886">
    <property type="term" value="C:plasma membrane"/>
    <property type="evidence" value="ECO:0000318"/>
    <property type="project" value="GO_Central"/>
</dbReference>
<dbReference type="GO" id="GO:0015648">
    <property type="term" value="F:lipid-linked peptidoglycan transporter activity"/>
    <property type="evidence" value="ECO:0000318"/>
    <property type="project" value="GO_Central"/>
</dbReference>
<dbReference type="GO" id="GO:0008955">
    <property type="term" value="F:peptidoglycan glycosyltransferase activity"/>
    <property type="evidence" value="ECO:0007669"/>
    <property type="project" value="RHEA"/>
</dbReference>
<dbReference type="GO" id="GO:0051301">
    <property type="term" value="P:cell division"/>
    <property type="evidence" value="ECO:0000318"/>
    <property type="project" value="GO_Central"/>
</dbReference>
<dbReference type="GO" id="GO:0071555">
    <property type="term" value="P:cell wall organization"/>
    <property type="evidence" value="ECO:0007669"/>
    <property type="project" value="UniProtKB-KW"/>
</dbReference>
<dbReference type="GO" id="GO:0009252">
    <property type="term" value="P:peptidoglycan biosynthetic process"/>
    <property type="evidence" value="ECO:0007669"/>
    <property type="project" value="UniProtKB-UniPathway"/>
</dbReference>
<dbReference type="GO" id="GO:0008360">
    <property type="term" value="P:regulation of cell shape"/>
    <property type="evidence" value="ECO:0000318"/>
    <property type="project" value="GO_Central"/>
</dbReference>
<dbReference type="InterPro" id="IPR018365">
    <property type="entry name" value="Cell_cycle_FtsW-rel_CS"/>
</dbReference>
<dbReference type="InterPro" id="IPR001182">
    <property type="entry name" value="FtsW/RodA"/>
</dbReference>
<dbReference type="PANTHER" id="PTHR30474">
    <property type="entry name" value="CELL CYCLE PROTEIN"/>
    <property type="match status" value="1"/>
</dbReference>
<dbReference type="PANTHER" id="PTHR30474:SF2">
    <property type="entry name" value="PEPTIDOGLYCAN GLYCOSYLTRANSFERASE FTSW-RELATED"/>
    <property type="match status" value="1"/>
</dbReference>
<dbReference type="Pfam" id="PF01098">
    <property type="entry name" value="FTSW_RODA_SPOVE"/>
    <property type="match status" value="1"/>
</dbReference>
<dbReference type="PROSITE" id="PS00428">
    <property type="entry name" value="FTSW_RODA_SPOVE"/>
    <property type="match status" value="1"/>
</dbReference>
<comment type="function">
    <text evidence="3">Peptidoglycan polymerase that is essential for cell division.</text>
</comment>
<comment type="catalytic activity">
    <reaction evidence="3">
        <text>[GlcNAc-(1-&gt;4)-Mur2Ac(oyl-L-Ala-gamma-D-Glu-L-Lys-D-Ala-D-Ala)](n)-di-trans,octa-cis-undecaprenyl diphosphate + beta-D-GlcNAc-(1-&gt;4)-Mur2Ac(oyl-L-Ala-gamma-D-Glu-L-Lys-D-Ala-D-Ala)-di-trans,octa-cis-undecaprenyl diphosphate = [GlcNAc-(1-&gt;4)-Mur2Ac(oyl-L-Ala-gamma-D-Glu-L-Lys-D-Ala-D-Ala)](n+1)-di-trans,octa-cis-undecaprenyl diphosphate + di-trans,octa-cis-undecaprenyl diphosphate + H(+)</text>
        <dbReference type="Rhea" id="RHEA:23708"/>
        <dbReference type="Rhea" id="RHEA-COMP:9602"/>
        <dbReference type="Rhea" id="RHEA-COMP:9603"/>
        <dbReference type="ChEBI" id="CHEBI:15378"/>
        <dbReference type="ChEBI" id="CHEBI:58405"/>
        <dbReference type="ChEBI" id="CHEBI:60033"/>
        <dbReference type="ChEBI" id="CHEBI:78435"/>
        <dbReference type="EC" id="2.4.99.28"/>
    </reaction>
</comment>
<comment type="pathway">
    <text evidence="3">Cell wall biogenesis; peptidoglycan biosynthesis.</text>
</comment>
<comment type="subcellular location">
    <subcellularLocation>
        <location evidence="1">Cell inner membrane</location>
        <topology evidence="4">Multi-pass membrane protein</topology>
    </subcellularLocation>
    <text evidence="1">Localizes to the division septum.</text>
</comment>
<comment type="similarity">
    <text evidence="5">Belongs to the SEDS family. FtsW subfamily.</text>
</comment>
<gene>
    <name type="primary">ftsW</name>
    <name type="ordered locus">slr1267</name>
</gene>
<feature type="chain" id="PRO_0000062712" description="Probable peptidoglycan glycosyltransferase FtsW">
    <location>
        <begin position="1"/>
        <end position="393"/>
    </location>
</feature>
<feature type="topological domain" description="Cytoplasmic" evidence="4">
    <location>
        <begin position="1"/>
        <end position="30"/>
    </location>
</feature>
<feature type="transmembrane region" description="Helical" evidence="4">
    <location>
        <begin position="31"/>
        <end position="51"/>
    </location>
</feature>
<feature type="topological domain" description="Extracellular" evidence="4">
    <location>
        <begin position="52"/>
        <end position="60"/>
    </location>
</feature>
<feature type="transmembrane region" description="Helical" evidence="4">
    <location>
        <begin position="61"/>
        <end position="81"/>
    </location>
</feature>
<feature type="topological domain" description="Cytoplasmic" evidence="4">
    <location>
        <begin position="82"/>
        <end position="84"/>
    </location>
</feature>
<feature type="transmembrane region" description="Helical" evidence="4">
    <location>
        <begin position="85"/>
        <end position="105"/>
    </location>
</feature>
<feature type="topological domain" description="Extracellular" evidence="4">
    <location>
        <begin position="106"/>
        <end position="119"/>
    </location>
</feature>
<feature type="transmembrane region" description="Helical" evidence="4">
    <location>
        <begin position="120"/>
        <end position="140"/>
    </location>
</feature>
<feature type="topological domain" description="Cytoplasmic" evidence="4">
    <location>
        <begin position="141"/>
        <end position="157"/>
    </location>
</feature>
<feature type="transmembrane region" description="Helical" evidence="4">
    <location>
        <begin position="158"/>
        <end position="178"/>
    </location>
</feature>
<feature type="topological domain" description="Extracellular" evidence="4">
    <location>
        <begin position="179"/>
        <end position="181"/>
    </location>
</feature>
<feature type="transmembrane region" description="Helical" evidence="4">
    <location>
        <begin position="182"/>
        <end position="202"/>
    </location>
</feature>
<feature type="topological domain" description="Cytoplasmic" evidence="4">
    <location>
        <begin position="203"/>
        <end position="242"/>
    </location>
</feature>
<feature type="transmembrane region" description="Helical" evidence="4">
    <location>
        <begin position="243"/>
        <end position="262"/>
    </location>
</feature>
<feature type="topological domain" description="Extracellular" evidence="4">
    <location>
        <begin position="263"/>
        <end position="285"/>
    </location>
</feature>
<feature type="transmembrane region" description="Helical" evidence="4">
    <location>
        <begin position="286"/>
        <end position="306"/>
    </location>
</feature>
<feature type="topological domain" description="Cytoplasmic" evidence="4">
    <location>
        <begin position="307"/>
        <end position="318"/>
    </location>
</feature>
<feature type="transmembrane region" description="Helical" evidence="4">
    <location>
        <begin position="319"/>
        <end position="339"/>
    </location>
</feature>
<feature type="topological domain" description="Extracellular" evidence="4">
    <location>
        <begin position="340"/>
        <end position="350"/>
    </location>
</feature>
<feature type="transmembrane region" description="Helical" evidence="4">
    <location>
        <begin position="351"/>
        <end position="371"/>
    </location>
</feature>
<feature type="topological domain" description="Cytoplasmic" evidence="4">
    <location>
        <begin position="372"/>
        <end position="393"/>
    </location>
</feature>
<reference key="1">
    <citation type="journal article" date="1996" name="DNA Res.">
        <title>Sequence analysis of the genome of the unicellular cyanobacterium Synechocystis sp. strain PCC6803. II. Sequence determination of the entire genome and assignment of potential protein-coding regions.</title>
        <authorList>
            <person name="Kaneko T."/>
            <person name="Sato S."/>
            <person name="Kotani H."/>
            <person name="Tanaka A."/>
            <person name="Asamizu E."/>
            <person name="Nakamura Y."/>
            <person name="Miyajima N."/>
            <person name="Hirosawa M."/>
            <person name="Sugiura M."/>
            <person name="Sasamoto S."/>
            <person name="Kimura T."/>
            <person name="Hosouchi T."/>
            <person name="Matsuno A."/>
            <person name="Muraki A."/>
            <person name="Nakazaki N."/>
            <person name="Naruo K."/>
            <person name="Okumura S."/>
            <person name="Shimpo S."/>
            <person name="Takeuchi C."/>
            <person name="Wada T."/>
            <person name="Watanabe A."/>
            <person name="Yamada M."/>
            <person name="Yasuda M."/>
            <person name="Tabata S."/>
        </authorList>
    </citation>
    <scope>NUCLEOTIDE SEQUENCE [LARGE SCALE GENOMIC DNA]</scope>
    <source>
        <strain>ATCC 27184 / PCC 6803 / Kazusa</strain>
    </source>
</reference>
<organism>
    <name type="scientific">Synechocystis sp. (strain ATCC 27184 / PCC 6803 / Kazusa)</name>
    <dbReference type="NCBI Taxonomy" id="1111708"/>
    <lineage>
        <taxon>Bacteria</taxon>
        <taxon>Bacillati</taxon>
        <taxon>Cyanobacteriota</taxon>
        <taxon>Cyanophyceae</taxon>
        <taxon>Synechococcales</taxon>
        <taxon>Merismopediaceae</taxon>
        <taxon>Synechocystis</taxon>
    </lineage>
</organism>